<proteinExistence type="inferred from homology"/>
<gene>
    <name type="ordered locus">SPG_1345</name>
</gene>
<evidence type="ECO:0000255" key="1">
    <source>
        <dbReference type="HAMAP-Rule" id="MF_01041"/>
    </source>
</evidence>
<name>Y1345_STRP4</name>
<organism>
    <name type="scientific">Streptococcus pneumoniae serotype 19F (strain G54)</name>
    <dbReference type="NCBI Taxonomy" id="512566"/>
    <lineage>
        <taxon>Bacteria</taxon>
        <taxon>Bacillati</taxon>
        <taxon>Bacillota</taxon>
        <taxon>Bacilli</taxon>
        <taxon>Lactobacillales</taxon>
        <taxon>Streptococcaceae</taxon>
        <taxon>Streptococcus</taxon>
    </lineage>
</organism>
<accession>B5E5R2</accession>
<reference key="1">
    <citation type="journal article" date="2001" name="Microb. Drug Resist.">
        <title>Annotated draft genomic sequence from a Streptococcus pneumoniae type 19F clinical isolate.</title>
        <authorList>
            <person name="Dopazo J."/>
            <person name="Mendoza A."/>
            <person name="Herrero J."/>
            <person name="Caldara F."/>
            <person name="Humbert Y."/>
            <person name="Friedli L."/>
            <person name="Guerrier M."/>
            <person name="Grand-Schenk E."/>
            <person name="Gandin C."/>
            <person name="de Francesco M."/>
            <person name="Polissi A."/>
            <person name="Buell G."/>
            <person name="Feger G."/>
            <person name="Garcia E."/>
            <person name="Peitsch M."/>
            <person name="Garcia-Bustos J.F."/>
        </authorList>
    </citation>
    <scope>NUCLEOTIDE SEQUENCE [LARGE SCALE GENOMIC DNA]</scope>
    <source>
        <strain>G54</strain>
    </source>
</reference>
<reference key="2">
    <citation type="submission" date="2008-03" db="EMBL/GenBank/DDBJ databases">
        <title>Pneumococcal beta glucoside metabolism investigated by whole genome comparison.</title>
        <authorList>
            <person name="Mulas L."/>
            <person name="Trappetti C."/>
            <person name="Hakenbeck R."/>
            <person name="Iannelli F."/>
            <person name="Pozzi G."/>
            <person name="Davidsen T.M."/>
            <person name="Tettelin H."/>
            <person name="Oggioni M."/>
        </authorList>
    </citation>
    <scope>NUCLEOTIDE SEQUENCE [LARGE SCALE GENOMIC DNA]</scope>
    <source>
        <strain>G54</strain>
    </source>
</reference>
<dbReference type="EMBL" id="CP001015">
    <property type="protein sequence ID" value="ACF54911.1"/>
    <property type="molecule type" value="Genomic_DNA"/>
</dbReference>
<dbReference type="SMR" id="B5E5R2"/>
<dbReference type="KEGG" id="spx:SPG_1345"/>
<dbReference type="HOGENOM" id="CLU_166693_0_0_9"/>
<dbReference type="Gene3D" id="1.10.220.80">
    <property type="entry name" value="BH2638-like"/>
    <property type="match status" value="1"/>
</dbReference>
<dbReference type="HAMAP" id="MF_01041">
    <property type="entry name" value="UPF0223"/>
    <property type="match status" value="1"/>
</dbReference>
<dbReference type="InterPro" id="IPR023324">
    <property type="entry name" value="BH2638-like_sf"/>
</dbReference>
<dbReference type="InterPro" id="IPR007920">
    <property type="entry name" value="UPF0223"/>
</dbReference>
<dbReference type="NCBIfam" id="NF003353">
    <property type="entry name" value="PRK04387.1"/>
    <property type="match status" value="1"/>
</dbReference>
<dbReference type="Pfam" id="PF05256">
    <property type="entry name" value="UPF0223"/>
    <property type="match status" value="1"/>
</dbReference>
<dbReference type="PIRSF" id="PIRSF037260">
    <property type="entry name" value="UPF0223"/>
    <property type="match status" value="1"/>
</dbReference>
<dbReference type="SUPFAM" id="SSF158504">
    <property type="entry name" value="BH2638-like"/>
    <property type="match status" value="1"/>
</dbReference>
<sequence>MNKQYSYPLDLSWSTEELASVLSFFNDVEAAYEGKVEAKKLLDSYKGFKAVVPSKSEEKRLGREFETVSGYSLYRAVQAAKEKGEGKISLGK</sequence>
<protein>
    <recommendedName>
        <fullName evidence="1">UPF0223 protein SPG_1345</fullName>
    </recommendedName>
</protein>
<comment type="similarity">
    <text evidence="1">Belongs to the UPF0223 family.</text>
</comment>
<feature type="chain" id="PRO_1000136030" description="UPF0223 protein SPG_1345">
    <location>
        <begin position="1"/>
        <end position="92"/>
    </location>
</feature>